<feature type="chain" id="PRO_1000142736" description="Large ribosomal subunit protein uL18">
    <location>
        <begin position="1"/>
        <end position="121"/>
    </location>
</feature>
<accession>B5ZB56</accession>
<proteinExistence type="inferred from homology"/>
<reference key="1">
    <citation type="submission" date="2008-10" db="EMBL/GenBank/DDBJ databases">
        <title>Genome sequence of Ureaplasma urealyticum serovar 10 ATCC-33699.</title>
        <authorList>
            <person name="Shrivastava S."/>
            <person name="Methe B.A."/>
            <person name="Glass J."/>
            <person name="White K."/>
            <person name="Duffy L.B."/>
        </authorList>
    </citation>
    <scope>NUCLEOTIDE SEQUENCE [LARGE SCALE GENOMIC DNA]</scope>
    <source>
        <strain>ATCC 33699 / Western</strain>
    </source>
</reference>
<gene>
    <name evidence="1" type="primary">rplR</name>
    <name type="ordered locus">UUR10_0242</name>
</gene>
<protein>
    <recommendedName>
        <fullName evidence="1">Large ribosomal subunit protein uL18</fullName>
    </recommendedName>
    <alternativeName>
        <fullName evidence="2">50S ribosomal protein L18</fullName>
    </alternativeName>
</protein>
<evidence type="ECO:0000255" key="1">
    <source>
        <dbReference type="HAMAP-Rule" id="MF_01337"/>
    </source>
</evidence>
<evidence type="ECO:0000305" key="2"/>
<comment type="function">
    <text evidence="1">This is one of the proteins that bind and probably mediate the attachment of the 5S RNA into the large ribosomal subunit, where it forms part of the central protuberance.</text>
</comment>
<comment type="subunit">
    <text evidence="1">Part of the 50S ribosomal subunit; part of the 5S rRNA/L5/L18/L25 subcomplex. Contacts the 5S and 23S rRNAs.</text>
</comment>
<comment type="similarity">
    <text evidence="1">Belongs to the universal ribosomal protein uL18 family.</text>
</comment>
<keyword id="KW-0687">Ribonucleoprotein</keyword>
<keyword id="KW-0689">Ribosomal protein</keyword>
<keyword id="KW-0694">RNA-binding</keyword>
<keyword id="KW-0699">rRNA-binding</keyword>
<organism>
    <name type="scientific">Ureaplasma urealyticum serovar 10 (strain ATCC 33699 / Western)</name>
    <dbReference type="NCBI Taxonomy" id="565575"/>
    <lineage>
        <taxon>Bacteria</taxon>
        <taxon>Bacillati</taxon>
        <taxon>Mycoplasmatota</taxon>
        <taxon>Mycoplasmoidales</taxon>
        <taxon>Mycoplasmoidaceae</taxon>
        <taxon>Ureaplasma</taxon>
    </lineage>
</organism>
<name>RL18_UREU1</name>
<sequence>MKRINFSRAKQRALRAKRLHVKIRNLQLAANKPVLVITKTNAHIWAQLICYNKNITLASSSSVQLDLQNGNKDNARLVGADIAKKALAQGFKQVIFNKNGAKYHGRIKALADAAREAGLEF</sequence>
<dbReference type="EMBL" id="CP001184">
    <property type="protein sequence ID" value="ACI59817.1"/>
    <property type="molecule type" value="Genomic_DNA"/>
</dbReference>
<dbReference type="RefSeq" id="WP_004025963.1">
    <property type="nucleotide sequence ID" value="NC_011374.1"/>
</dbReference>
<dbReference type="SMR" id="B5ZB56"/>
<dbReference type="STRING" id="565575.UUR10_0242"/>
<dbReference type="GeneID" id="93848722"/>
<dbReference type="KEGG" id="uue:UUR10_0242"/>
<dbReference type="eggNOG" id="COG0256">
    <property type="taxonomic scope" value="Bacteria"/>
</dbReference>
<dbReference type="HOGENOM" id="CLU_098841_0_1_14"/>
<dbReference type="OrthoDB" id="9810939at2"/>
<dbReference type="Proteomes" id="UP000002018">
    <property type="component" value="Chromosome"/>
</dbReference>
<dbReference type="GO" id="GO:0022625">
    <property type="term" value="C:cytosolic large ribosomal subunit"/>
    <property type="evidence" value="ECO:0007669"/>
    <property type="project" value="TreeGrafter"/>
</dbReference>
<dbReference type="GO" id="GO:0008097">
    <property type="term" value="F:5S rRNA binding"/>
    <property type="evidence" value="ECO:0007669"/>
    <property type="project" value="TreeGrafter"/>
</dbReference>
<dbReference type="GO" id="GO:0003735">
    <property type="term" value="F:structural constituent of ribosome"/>
    <property type="evidence" value="ECO:0007669"/>
    <property type="project" value="InterPro"/>
</dbReference>
<dbReference type="GO" id="GO:0006412">
    <property type="term" value="P:translation"/>
    <property type="evidence" value="ECO:0007669"/>
    <property type="project" value="UniProtKB-UniRule"/>
</dbReference>
<dbReference type="CDD" id="cd00432">
    <property type="entry name" value="Ribosomal_L18_L5e"/>
    <property type="match status" value="1"/>
</dbReference>
<dbReference type="Gene3D" id="3.30.420.100">
    <property type="match status" value="1"/>
</dbReference>
<dbReference type="HAMAP" id="MF_01337_B">
    <property type="entry name" value="Ribosomal_uL18_B"/>
    <property type="match status" value="1"/>
</dbReference>
<dbReference type="InterPro" id="IPR004389">
    <property type="entry name" value="Ribosomal_uL18_bac-type"/>
</dbReference>
<dbReference type="InterPro" id="IPR005484">
    <property type="entry name" value="Ribosomal_uL18_bac/euk"/>
</dbReference>
<dbReference type="NCBIfam" id="TIGR00060">
    <property type="entry name" value="L18_bact"/>
    <property type="match status" value="1"/>
</dbReference>
<dbReference type="PANTHER" id="PTHR12899">
    <property type="entry name" value="39S RIBOSOMAL PROTEIN L18, MITOCHONDRIAL"/>
    <property type="match status" value="1"/>
</dbReference>
<dbReference type="PANTHER" id="PTHR12899:SF3">
    <property type="entry name" value="LARGE RIBOSOMAL SUBUNIT PROTEIN UL18M"/>
    <property type="match status" value="1"/>
</dbReference>
<dbReference type="Pfam" id="PF00861">
    <property type="entry name" value="Ribosomal_L18p"/>
    <property type="match status" value="1"/>
</dbReference>
<dbReference type="SUPFAM" id="SSF53137">
    <property type="entry name" value="Translational machinery components"/>
    <property type="match status" value="1"/>
</dbReference>